<accession>P70377</accession>
<accession>B1AU21</accession>
<accession>O35338</accession>
<accession>Q3UR31</accession>
<accession>Q8VCY9</accession>
<accession>Q9JLA5</accession>
<keyword id="KW-0025">Alternative splicing</keyword>
<keyword id="KW-1003">Cell membrane</keyword>
<keyword id="KW-0966">Cell projection</keyword>
<keyword id="KW-0963">Cytoplasm</keyword>
<keyword id="KW-0472">Membrane</keyword>
<keyword id="KW-0493">Microtubule</keyword>
<keyword id="KW-0524">Neurogenesis</keyword>
<keyword id="KW-0539">Nucleus</keyword>
<keyword id="KW-0597">Phosphoprotein</keyword>
<keyword id="KW-1185">Reference proteome</keyword>
<sequence>MAAAIASSLIRQKRQAREREKSNACKCVSSPSKGKTSCDKNKLNVFSRVKLFGSKKRRRRRPEPQLKGIVTKLYSRQGYHLQLQADGTIDGTKDEDSTYTLFNLIPVGLRVVAIQGVQTKLYLAMNSEGYLYTSEHFTPECKFKESVFENYYVTYSSMIYRQQQSGRGWYLGLNKEGEIMKGNHVKKNKPAAHFLPKPLKVAMYKEPSLHDLTEFSRSGSGTPTKSRSVSGVLNGGKSMSHNEST</sequence>
<gene>
    <name evidence="14" type="primary">Fgf13</name>
    <name type="synonym">Fhf2</name>
</gene>
<dbReference type="EMBL" id="U66202">
    <property type="protein sequence ID" value="AAB18918.1"/>
    <property type="molecule type" value="mRNA"/>
</dbReference>
<dbReference type="EMBL" id="AF020737">
    <property type="protein sequence ID" value="AAB71606.1"/>
    <property type="molecule type" value="mRNA"/>
</dbReference>
<dbReference type="EMBL" id="AK141848">
    <property type="protein sequence ID" value="BAE24857.1"/>
    <property type="molecule type" value="mRNA"/>
</dbReference>
<dbReference type="EMBL" id="AL669891">
    <property type="status" value="NOT_ANNOTATED_CDS"/>
    <property type="molecule type" value="Genomic_DNA"/>
</dbReference>
<dbReference type="EMBL" id="AL672247">
    <property type="status" value="NOT_ANNOTATED_CDS"/>
    <property type="molecule type" value="Genomic_DNA"/>
</dbReference>
<dbReference type="EMBL" id="AL713968">
    <property type="status" value="NOT_ANNOTATED_CDS"/>
    <property type="molecule type" value="Genomic_DNA"/>
</dbReference>
<dbReference type="EMBL" id="CH466583">
    <property type="protein sequence ID" value="EDL42180.1"/>
    <property type="molecule type" value="Genomic_DNA"/>
</dbReference>
<dbReference type="EMBL" id="CH466583">
    <property type="protein sequence ID" value="EDL42182.1"/>
    <property type="molecule type" value="Genomic_DNA"/>
</dbReference>
<dbReference type="EMBL" id="BC018238">
    <property type="protein sequence ID" value="AAH18238.1"/>
    <property type="molecule type" value="mRNA"/>
</dbReference>
<dbReference type="EMBL" id="AF199608">
    <property type="protein sequence ID" value="AAF31395.1"/>
    <property type="molecule type" value="mRNA"/>
</dbReference>
<dbReference type="CCDS" id="CCDS30157.1">
    <molecule id="P70377-1"/>
</dbReference>
<dbReference type="CCDS" id="CCDS72383.1">
    <molecule id="P70377-2"/>
</dbReference>
<dbReference type="RefSeq" id="NP_001277344.1">
    <molecule id="P70377-2"/>
    <property type="nucleotide sequence ID" value="NM_001290415.1"/>
</dbReference>
<dbReference type="RefSeq" id="NP_034330.2">
    <molecule id="P70377-1"/>
    <property type="nucleotide sequence ID" value="NM_010200.3"/>
</dbReference>
<dbReference type="SMR" id="P70377"/>
<dbReference type="BioGRID" id="199642">
    <property type="interactions" value="3"/>
</dbReference>
<dbReference type="FunCoup" id="P70377">
    <property type="interactions" value="530"/>
</dbReference>
<dbReference type="STRING" id="10090.ENSMUSP00000033473"/>
<dbReference type="iPTMnet" id="P70377"/>
<dbReference type="PhosphoSitePlus" id="P70377"/>
<dbReference type="PaxDb" id="10090-ENSMUSP00000033473"/>
<dbReference type="PeptideAtlas" id="P70377"/>
<dbReference type="ProteomicsDB" id="271569">
    <molecule id="P70377-1"/>
</dbReference>
<dbReference type="ProteomicsDB" id="271570">
    <molecule id="P70377-2"/>
</dbReference>
<dbReference type="ProteomicsDB" id="271571">
    <molecule id="P70377-3"/>
</dbReference>
<dbReference type="TopDownProteomics" id="P70377-2">
    <molecule id="P70377-2"/>
</dbReference>
<dbReference type="ABCD" id="P70377">
    <property type="antibodies" value="2 sequenced antibodies"/>
</dbReference>
<dbReference type="DNASU" id="14168"/>
<dbReference type="Ensembl" id="ENSMUST00000033473.12">
    <molecule id="P70377-1"/>
    <property type="protein sequence ID" value="ENSMUSP00000033473.6"/>
    <property type="gene ID" value="ENSMUSG00000031137.18"/>
</dbReference>
<dbReference type="Ensembl" id="ENSMUST00000119306.2">
    <molecule id="P70377-2"/>
    <property type="protein sequence ID" value="ENSMUSP00000113206.2"/>
    <property type="gene ID" value="ENSMUSG00000031137.18"/>
</dbReference>
<dbReference type="GeneID" id="14168"/>
<dbReference type="KEGG" id="mmu:14168"/>
<dbReference type="UCSC" id="uc009tht.3">
    <molecule id="P70377-1"/>
    <property type="organism name" value="mouse"/>
</dbReference>
<dbReference type="UCSC" id="uc009thu.3">
    <molecule id="P70377-2"/>
    <property type="organism name" value="mouse"/>
</dbReference>
<dbReference type="UCSC" id="uc009thv.2">
    <molecule id="P70377-3"/>
    <property type="organism name" value="mouse"/>
</dbReference>
<dbReference type="AGR" id="MGI:109178"/>
<dbReference type="CTD" id="2258"/>
<dbReference type="MGI" id="MGI:109178">
    <property type="gene designation" value="Fgf13"/>
</dbReference>
<dbReference type="VEuPathDB" id="HostDB:ENSMUSG00000031137"/>
<dbReference type="eggNOG" id="KOG3885">
    <property type="taxonomic scope" value="Eukaryota"/>
</dbReference>
<dbReference type="GeneTree" id="ENSGT00940000162313"/>
<dbReference type="InParanoid" id="P70377"/>
<dbReference type="OMA" id="MECKFKE"/>
<dbReference type="OrthoDB" id="6158176at2759"/>
<dbReference type="PhylomeDB" id="P70377"/>
<dbReference type="TreeFam" id="TF317805"/>
<dbReference type="BioGRID-ORCS" id="14168">
    <property type="hits" value="1 hit in 79 CRISPR screens"/>
</dbReference>
<dbReference type="ChiTaRS" id="Fgf13">
    <property type="organism name" value="mouse"/>
</dbReference>
<dbReference type="PRO" id="PR:P70377"/>
<dbReference type="Proteomes" id="UP000000589">
    <property type="component" value="Chromosome X"/>
</dbReference>
<dbReference type="RNAct" id="P70377">
    <property type="molecule type" value="protein"/>
</dbReference>
<dbReference type="Bgee" id="ENSMUSG00000031137">
    <property type="expression patterns" value="Expressed in ventral tegmental area and 249 other cell types or tissues"/>
</dbReference>
<dbReference type="ExpressionAtlas" id="P70377">
    <property type="expression patterns" value="baseline and differential"/>
</dbReference>
<dbReference type="GO" id="GO:0030424">
    <property type="term" value="C:axon"/>
    <property type="evidence" value="ECO:0000314"/>
    <property type="project" value="UniProtKB"/>
</dbReference>
<dbReference type="GO" id="GO:0005737">
    <property type="term" value="C:cytoplasm"/>
    <property type="evidence" value="ECO:0000314"/>
    <property type="project" value="BHF-UCL"/>
</dbReference>
<dbReference type="GO" id="GO:0005829">
    <property type="term" value="C:cytosol"/>
    <property type="evidence" value="ECO:0000314"/>
    <property type="project" value="MGI"/>
</dbReference>
<dbReference type="GO" id="GO:0030425">
    <property type="term" value="C:dendrite"/>
    <property type="evidence" value="ECO:0000314"/>
    <property type="project" value="UniProtKB"/>
</dbReference>
<dbReference type="GO" id="GO:0030175">
    <property type="term" value="C:filopodium"/>
    <property type="evidence" value="ECO:0000314"/>
    <property type="project" value="UniProtKB"/>
</dbReference>
<dbReference type="GO" id="GO:0030426">
    <property type="term" value="C:growth cone"/>
    <property type="evidence" value="ECO:0000314"/>
    <property type="project" value="UniProtKB"/>
</dbReference>
<dbReference type="GO" id="GO:0014704">
    <property type="term" value="C:intercalated disc"/>
    <property type="evidence" value="ECO:0000314"/>
    <property type="project" value="UniProtKB"/>
</dbReference>
<dbReference type="GO" id="GO:0016328">
    <property type="term" value="C:lateral plasma membrane"/>
    <property type="evidence" value="ECO:0000314"/>
    <property type="project" value="BHF-UCL"/>
</dbReference>
<dbReference type="GO" id="GO:0005874">
    <property type="term" value="C:microtubule"/>
    <property type="evidence" value="ECO:0000314"/>
    <property type="project" value="UniProtKB"/>
</dbReference>
<dbReference type="GO" id="GO:0043005">
    <property type="term" value="C:neuron projection"/>
    <property type="evidence" value="ECO:0000314"/>
    <property type="project" value="UniProtKB"/>
</dbReference>
<dbReference type="GO" id="GO:0005634">
    <property type="term" value="C:nucleus"/>
    <property type="evidence" value="ECO:0000314"/>
    <property type="project" value="BHF-UCL"/>
</dbReference>
<dbReference type="GO" id="GO:0005886">
    <property type="term" value="C:plasma membrane"/>
    <property type="evidence" value="ECO:0000314"/>
    <property type="project" value="UniProtKB"/>
</dbReference>
<dbReference type="GO" id="GO:0042383">
    <property type="term" value="C:sarcolemma"/>
    <property type="evidence" value="ECO:0007669"/>
    <property type="project" value="UniProtKB-SubCell"/>
</dbReference>
<dbReference type="GO" id="GO:0048487">
    <property type="term" value="F:beta-tubulin binding"/>
    <property type="evidence" value="ECO:0000314"/>
    <property type="project" value="UniProtKB"/>
</dbReference>
<dbReference type="GO" id="GO:0008083">
    <property type="term" value="F:growth factor activity"/>
    <property type="evidence" value="ECO:0007669"/>
    <property type="project" value="InterPro"/>
</dbReference>
<dbReference type="GO" id="GO:0008017">
    <property type="term" value="F:microtubule binding"/>
    <property type="evidence" value="ECO:0000314"/>
    <property type="project" value="UniProtKB"/>
</dbReference>
<dbReference type="GO" id="GO:0030295">
    <property type="term" value="F:protein kinase activator activity"/>
    <property type="evidence" value="ECO:0000266"/>
    <property type="project" value="MGI"/>
</dbReference>
<dbReference type="GO" id="GO:0017080">
    <property type="term" value="F:sodium channel regulator activity"/>
    <property type="evidence" value="ECO:0000315"/>
    <property type="project" value="UniProtKB"/>
</dbReference>
<dbReference type="GO" id="GO:0044325">
    <property type="term" value="F:transmembrane transporter binding"/>
    <property type="evidence" value="ECO:0000353"/>
    <property type="project" value="UniProtKB"/>
</dbReference>
<dbReference type="GO" id="GO:0048755">
    <property type="term" value="P:branching morphogenesis of a nerve"/>
    <property type="evidence" value="ECO:0000315"/>
    <property type="project" value="MGI"/>
</dbReference>
<dbReference type="GO" id="GO:0021795">
    <property type="term" value="P:cerebral cortex cell migration"/>
    <property type="evidence" value="ECO:0000315"/>
    <property type="project" value="UniProtKB"/>
</dbReference>
<dbReference type="GO" id="GO:0045200">
    <property type="term" value="P:establishment of neuroblast polarity"/>
    <property type="evidence" value="ECO:0000315"/>
    <property type="project" value="UniProtKB"/>
</dbReference>
<dbReference type="GO" id="GO:0021766">
    <property type="term" value="P:hippocampus development"/>
    <property type="evidence" value="ECO:0000315"/>
    <property type="project" value="UniProtKB"/>
</dbReference>
<dbReference type="GO" id="GO:1904862">
    <property type="term" value="P:inhibitory synapse assembly"/>
    <property type="evidence" value="ECO:0000315"/>
    <property type="project" value="UniProtKB"/>
</dbReference>
<dbReference type="GO" id="GO:0007612">
    <property type="term" value="P:learning"/>
    <property type="evidence" value="ECO:0000315"/>
    <property type="project" value="UniProtKB"/>
</dbReference>
<dbReference type="GO" id="GO:0007611">
    <property type="term" value="P:learning or memory"/>
    <property type="evidence" value="ECO:0000315"/>
    <property type="project" value="MGI"/>
</dbReference>
<dbReference type="GO" id="GO:0000165">
    <property type="term" value="P:MAPK cascade"/>
    <property type="evidence" value="ECO:0000266"/>
    <property type="project" value="MGI"/>
</dbReference>
<dbReference type="GO" id="GO:0007613">
    <property type="term" value="P:memory"/>
    <property type="evidence" value="ECO:0000315"/>
    <property type="project" value="UniProtKB"/>
</dbReference>
<dbReference type="GO" id="GO:0046785">
    <property type="term" value="P:microtubule polymerization"/>
    <property type="evidence" value="ECO:0000315"/>
    <property type="project" value="UniProtKB"/>
</dbReference>
<dbReference type="GO" id="GO:0048671">
    <property type="term" value="P:negative regulation of collateral sprouting"/>
    <property type="evidence" value="ECO:0000315"/>
    <property type="project" value="UniProtKB"/>
</dbReference>
<dbReference type="GO" id="GO:0007026">
    <property type="term" value="P:negative regulation of microtubule depolymerization"/>
    <property type="evidence" value="ECO:0000315"/>
    <property type="project" value="UniProtKB"/>
</dbReference>
<dbReference type="GO" id="GO:0022008">
    <property type="term" value="P:neurogenesis"/>
    <property type="evidence" value="ECO:0000315"/>
    <property type="project" value="MGI"/>
</dbReference>
<dbReference type="GO" id="GO:0001764">
    <property type="term" value="P:neuron migration"/>
    <property type="evidence" value="ECO:0000315"/>
    <property type="project" value="UniProtKB"/>
</dbReference>
<dbReference type="GO" id="GO:1905152">
    <property type="term" value="P:positive regulation of voltage-gated sodium channel activity"/>
    <property type="evidence" value="ECO:0000250"/>
    <property type="project" value="UniProtKB"/>
</dbReference>
<dbReference type="GO" id="GO:0072659">
    <property type="term" value="P:protein localization to plasma membrane"/>
    <property type="evidence" value="ECO:0000315"/>
    <property type="project" value="UniProtKB"/>
</dbReference>
<dbReference type="GO" id="GO:0098909">
    <property type="term" value="P:regulation of cardiac muscle cell action potential involved in regulation of contraction"/>
    <property type="evidence" value="ECO:0000315"/>
    <property type="project" value="BHF-UCL"/>
</dbReference>
<dbReference type="GO" id="GO:1990834">
    <property type="term" value="P:response to odorant"/>
    <property type="evidence" value="ECO:0007669"/>
    <property type="project" value="Ensembl"/>
</dbReference>
<dbReference type="GO" id="GO:0006814">
    <property type="term" value="P:sodium ion transport"/>
    <property type="evidence" value="ECO:0000315"/>
    <property type="project" value="BHF-UCL"/>
</dbReference>
<dbReference type="CDD" id="cd23329">
    <property type="entry name" value="beta-trefoil_FGF13"/>
    <property type="match status" value="1"/>
</dbReference>
<dbReference type="FunFam" id="2.80.10.50:FF:000001">
    <property type="entry name" value="Fibroblast growth factor"/>
    <property type="match status" value="1"/>
</dbReference>
<dbReference type="Gene3D" id="2.80.10.50">
    <property type="match status" value="1"/>
</dbReference>
<dbReference type="InterPro" id="IPR002209">
    <property type="entry name" value="Fibroblast_GF_fam"/>
</dbReference>
<dbReference type="InterPro" id="IPR008996">
    <property type="entry name" value="IL1/FGF"/>
</dbReference>
<dbReference type="PANTHER" id="PTHR11486">
    <property type="entry name" value="FIBROBLAST GROWTH FACTOR"/>
    <property type="match status" value="1"/>
</dbReference>
<dbReference type="Pfam" id="PF00167">
    <property type="entry name" value="FGF"/>
    <property type="match status" value="1"/>
</dbReference>
<dbReference type="PRINTS" id="PR00263">
    <property type="entry name" value="HBGFFGF"/>
</dbReference>
<dbReference type="PRINTS" id="PR00262">
    <property type="entry name" value="IL1HBGF"/>
</dbReference>
<dbReference type="SMART" id="SM00442">
    <property type="entry name" value="FGF"/>
    <property type="match status" value="1"/>
</dbReference>
<dbReference type="SUPFAM" id="SSF50353">
    <property type="entry name" value="Cytokine"/>
    <property type="match status" value="1"/>
</dbReference>
<dbReference type="PROSITE" id="PS00247">
    <property type="entry name" value="HBGF_FGF"/>
    <property type="match status" value="1"/>
</dbReference>
<reference key="1">
    <citation type="journal article" date="1996" name="Proc. Natl. Acad. Sci. U.S.A.">
        <title>Fibroblast growth factor (FGF) homologous factors: new members of the FGF family implicated in nervous system development.</title>
        <authorList>
            <person name="Smallwood P.M."/>
            <person name="Munoz-Sanjuan I."/>
            <person name="Tong P."/>
            <person name="Macke J.P."/>
            <person name="Hendry S.H."/>
            <person name="Gilbert D.J."/>
            <person name="Copeland N.G."/>
            <person name="Jenkins N.A."/>
            <person name="Nathans J."/>
        </authorList>
    </citation>
    <scope>NUCLEOTIDE SEQUENCE [MRNA] (ISOFORM 1)</scope>
    <source>
        <tissue>Eye</tissue>
    </source>
</reference>
<reference key="2">
    <citation type="journal article" date="1997" name="Mech. Dev.">
        <title>Murine FGF-12 and FGF-13: expression in embryonic nervous system, connective tissue and heart.</title>
        <authorList>
            <person name="Hartung H."/>
            <person name="Feldman B."/>
            <person name="Lovec H."/>
            <person name="Coulier F."/>
            <person name="Birnbaum D."/>
            <person name="Goldfarb M."/>
        </authorList>
    </citation>
    <scope>NUCLEOTIDE SEQUENCE [MRNA] (ISOFORM 1)</scope>
    <scope>TISSUE SPECIFICITY</scope>
    <scope>DEVELOPMENTAL STAGE</scope>
</reference>
<reference key="3">
    <citation type="journal article" date="2005" name="Science">
        <title>The transcriptional landscape of the mammalian genome.</title>
        <authorList>
            <person name="Carninci P."/>
            <person name="Kasukawa T."/>
            <person name="Katayama S."/>
            <person name="Gough J."/>
            <person name="Frith M.C."/>
            <person name="Maeda N."/>
            <person name="Oyama R."/>
            <person name="Ravasi T."/>
            <person name="Lenhard B."/>
            <person name="Wells C."/>
            <person name="Kodzius R."/>
            <person name="Shimokawa K."/>
            <person name="Bajic V.B."/>
            <person name="Brenner S.E."/>
            <person name="Batalov S."/>
            <person name="Forrest A.R."/>
            <person name="Zavolan M."/>
            <person name="Davis M.J."/>
            <person name="Wilming L.G."/>
            <person name="Aidinis V."/>
            <person name="Allen J.E."/>
            <person name="Ambesi-Impiombato A."/>
            <person name="Apweiler R."/>
            <person name="Aturaliya R.N."/>
            <person name="Bailey T.L."/>
            <person name="Bansal M."/>
            <person name="Baxter L."/>
            <person name="Beisel K.W."/>
            <person name="Bersano T."/>
            <person name="Bono H."/>
            <person name="Chalk A.M."/>
            <person name="Chiu K.P."/>
            <person name="Choudhary V."/>
            <person name="Christoffels A."/>
            <person name="Clutterbuck D.R."/>
            <person name="Crowe M.L."/>
            <person name="Dalla E."/>
            <person name="Dalrymple B.P."/>
            <person name="de Bono B."/>
            <person name="Della Gatta G."/>
            <person name="di Bernardo D."/>
            <person name="Down T."/>
            <person name="Engstrom P."/>
            <person name="Fagiolini M."/>
            <person name="Faulkner G."/>
            <person name="Fletcher C.F."/>
            <person name="Fukushima T."/>
            <person name="Furuno M."/>
            <person name="Futaki S."/>
            <person name="Gariboldi M."/>
            <person name="Georgii-Hemming P."/>
            <person name="Gingeras T.R."/>
            <person name="Gojobori T."/>
            <person name="Green R.E."/>
            <person name="Gustincich S."/>
            <person name="Harbers M."/>
            <person name="Hayashi Y."/>
            <person name="Hensch T.K."/>
            <person name="Hirokawa N."/>
            <person name="Hill D."/>
            <person name="Huminiecki L."/>
            <person name="Iacono M."/>
            <person name="Ikeo K."/>
            <person name="Iwama A."/>
            <person name="Ishikawa T."/>
            <person name="Jakt M."/>
            <person name="Kanapin A."/>
            <person name="Katoh M."/>
            <person name="Kawasawa Y."/>
            <person name="Kelso J."/>
            <person name="Kitamura H."/>
            <person name="Kitano H."/>
            <person name="Kollias G."/>
            <person name="Krishnan S.P."/>
            <person name="Kruger A."/>
            <person name="Kummerfeld S.K."/>
            <person name="Kurochkin I.V."/>
            <person name="Lareau L.F."/>
            <person name="Lazarevic D."/>
            <person name="Lipovich L."/>
            <person name="Liu J."/>
            <person name="Liuni S."/>
            <person name="McWilliam S."/>
            <person name="Madan Babu M."/>
            <person name="Madera M."/>
            <person name="Marchionni L."/>
            <person name="Matsuda H."/>
            <person name="Matsuzawa S."/>
            <person name="Miki H."/>
            <person name="Mignone F."/>
            <person name="Miyake S."/>
            <person name="Morris K."/>
            <person name="Mottagui-Tabar S."/>
            <person name="Mulder N."/>
            <person name="Nakano N."/>
            <person name="Nakauchi H."/>
            <person name="Ng P."/>
            <person name="Nilsson R."/>
            <person name="Nishiguchi S."/>
            <person name="Nishikawa S."/>
            <person name="Nori F."/>
            <person name="Ohara O."/>
            <person name="Okazaki Y."/>
            <person name="Orlando V."/>
            <person name="Pang K.C."/>
            <person name="Pavan W.J."/>
            <person name="Pavesi G."/>
            <person name="Pesole G."/>
            <person name="Petrovsky N."/>
            <person name="Piazza S."/>
            <person name="Reed J."/>
            <person name="Reid J.F."/>
            <person name="Ring B.Z."/>
            <person name="Ringwald M."/>
            <person name="Rost B."/>
            <person name="Ruan Y."/>
            <person name="Salzberg S.L."/>
            <person name="Sandelin A."/>
            <person name="Schneider C."/>
            <person name="Schoenbach C."/>
            <person name="Sekiguchi K."/>
            <person name="Semple C.A."/>
            <person name="Seno S."/>
            <person name="Sessa L."/>
            <person name="Sheng Y."/>
            <person name="Shibata Y."/>
            <person name="Shimada H."/>
            <person name="Shimada K."/>
            <person name="Silva D."/>
            <person name="Sinclair B."/>
            <person name="Sperling S."/>
            <person name="Stupka E."/>
            <person name="Sugiura K."/>
            <person name="Sultana R."/>
            <person name="Takenaka Y."/>
            <person name="Taki K."/>
            <person name="Tammoja K."/>
            <person name="Tan S.L."/>
            <person name="Tang S."/>
            <person name="Taylor M.S."/>
            <person name="Tegner J."/>
            <person name="Teichmann S.A."/>
            <person name="Ueda H.R."/>
            <person name="van Nimwegen E."/>
            <person name="Verardo R."/>
            <person name="Wei C.L."/>
            <person name="Yagi K."/>
            <person name="Yamanishi H."/>
            <person name="Zabarovsky E."/>
            <person name="Zhu S."/>
            <person name="Zimmer A."/>
            <person name="Hide W."/>
            <person name="Bult C."/>
            <person name="Grimmond S.M."/>
            <person name="Teasdale R.D."/>
            <person name="Liu E.T."/>
            <person name="Brusic V."/>
            <person name="Quackenbush J."/>
            <person name="Wahlestedt C."/>
            <person name="Mattick J.S."/>
            <person name="Hume D.A."/>
            <person name="Kai C."/>
            <person name="Sasaki D."/>
            <person name="Tomaru Y."/>
            <person name="Fukuda S."/>
            <person name="Kanamori-Katayama M."/>
            <person name="Suzuki M."/>
            <person name="Aoki J."/>
            <person name="Arakawa T."/>
            <person name="Iida J."/>
            <person name="Imamura K."/>
            <person name="Itoh M."/>
            <person name="Kato T."/>
            <person name="Kawaji H."/>
            <person name="Kawagashira N."/>
            <person name="Kawashima T."/>
            <person name="Kojima M."/>
            <person name="Kondo S."/>
            <person name="Konno H."/>
            <person name="Nakano K."/>
            <person name="Ninomiya N."/>
            <person name="Nishio T."/>
            <person name="Okada M."/>
            <person name="Plessy C."/>
            <person name="Shibata K."/>
            <person name="Shiraki T."/>
            <person name="Suzuki S."/>
            <person name="Tagami M."/>
            <person name="Waki K."/>
            <person name="Watahiki A."/>
            <person name="Okamura-Oho Y."/>
            <person name="Suzuki H."/>
            <person name="Kawai J."/>
            <person name="Hayashizaki Y."/>
        </authorList>
    </citation>
    <scope>NUCLEOTIDE SEQUENCE [LARGE SCALE MRNA] (ISOFORM 2)</scope>
    <source>
        <strain>C57BL/6J</strain>
        <tissue>Spinal ganglion</tissue>
    </source>
</reference>
<reference key="4">
    <citation type="journal article" date="2009" name="PLoS Biol.">
        <title>Lineage-specific biology revealed by a finished genome assembly of the mouse.</title>
        <authorList>
            <person name="Church D.M."/>
            <person name="Goodstadt L."/>
            <person name="Hillier L.W."/>
            <person name="Zody M.C."/>
            <person name="Goldstein S."/>
            <person name="She X."/>
            <person name="Bult C.J."/>
            <person name="Agarwala R."/>
            <person name="Cherry J.L."/>
            <person name="DiCuccio M."/>
            <person name="Hlavina W."/>
            <person name="Kapustin Y."/>
            <person name="Meric P."/>
            <person name="Maglott D."/>
            <person name="Birtle Z."/>
            <person name="Marques A.C."/>
            <person name="Graves T."/>
            <person name="Zhou S."/>
            <person name="Teague B."/>
            <person name="Potamousis K."/>
            <person name="Churas C."/>
            <person name="Place M."/>
            <person name="Herschleb J."/>
            <person name="Runnheim R."/>
            <person name="Forrest D."/>
            <person name="Amos-Landgraf J."/>
            <person name="Schwartz D.C."/>
            <person name="Cheng Z."/>
            <person name="Lindblad-Toh K."/>
            <person name="Eichler E.E."/>
            <person name="Ponting C.P."/>
        </authorList>
    </citation>
    <scope>NUCLEOTIDE SEQUENCE [LARGE SCALE GENOMIC DNA]</scope>
    <source>
        <strain>C57BL/6J</strain>
    </source>
</reference>
<reference key="5">
    <citation type="submission" date="2005-07" db="EMBL/GenBank/DDBJ databases">
        <authorList>
            <person name="Mural R.J."/>
            <person name="Adams M.D."/>
            <person name="Myers E.W."/>
            <person name="Smith H.O."/>
            <person name="Venter J.C."/>
        </authorList>
    </citation>
    <scope>NUCLEOTIDE SEQUENCE [LARGE SCALE GENOMIC DNA]</scope>
</reference>
<reference key="6">
    <citation type="journal article" date="2004" name="Genome Res.">
        <title>The status, quality, and expansion of the NIH full-length cDNA project: the Mammalian Gene Collection (MGC).</title>
        <authorList>
            <consortium name="The MGC Project Team"/>
        </authorList>
    </citation>
    <scope>NUCLEOTIDE SEQUENCE [LARGE SCALE MRNA] (ISOFORM 1)</scope>
    <source>
        <tissue>Eye</tissue>
    </source>
</reference>
<reference key="7">
    <citation type="journal article" date="2000" name="J. Biol. Chem.">
        <title>Isoform diversity among fibroblast growth factor homologous factors is generated by alternative promoter usage and differential splicing.</title>
        <authorList>
            <person name="Munoz-Sanjuan I."/>
            <person name="Smallwood P.M."/>
            <person name="Nathans J."/>
        </authorList>
    </citation>
    <scope>NUCLEOTIDE SEQUENCE [MRNA] OF 1-98 (ISOFORM 3)</scope>
    <scope>ALTERNATIVE SPLICING</scope>
    <scope>TISSUE SPECIFICITY</scope>
    <scope>SUBCELLULAR LOCATION</scope>
</reference>
<reference key="8">
    <citation type="journal article" date="2001" name="Curr. Biol.">
        <title>Fibroblast growth factor homologous factors are intracellular signaling proteins.</title>
        <authorList>
            <person name="Schoorlemmer J."/>
            <person name="Goldfarb M."/>
        </authorList>
    </citation>
    <scope>FUNCTION IN MAPK SIGNALING</scope>
    <scope>INTERACTION WITH MAPK8IP2</scope>
</reference>
<reference key="9">
    <citation type="journal article" date="2002" name="J. Biol. Chem.">
        <title>Fibroblast growth factor homologous factors and the islet brain-2 scaffold protein regulate activation of a stress-activated protein kinase.</title>
        <authorList>
            <person name="Schoorlemmer J."/>
            <person name="Goldfarb M."/>
        </authorList>
    </citation>
    <scope>FUNCTION IN MAPK SIGNALING</scope>
</reference>
<reference key="10">
    <citation type="journal article" date="2010" name="Cell">
        <title>A tissue-specific atlas of mouse protein phosphorylation and expression.</title>
        <authorList>
            <person name="Huttlin E.L."/>
            <person name="Jedrychowski M.P."/>
            <person name="Elias J.E."/>
            <person name="Goswami T."/>
            <person name="Rad R."/>
            <person name="Beausoleil S.A."/>
            <person name="Villen J."/>
            <person name="Haas W."/>
            <person name="Sowa M.E."/>
            <person name="Gygi S.P."/>
        </authorList>
    </citation>
    <scope>PHOSPHORYLATION [LARGE SCALE ANALYSIS] AT SER-208</scope>
    <scope>IDENTIFICATION BY MASS SPECTROMETRY [LARGE SCALE ANALYSIS]</scope>
    <source>
        <tissue>Heart</tissue>
    </source>
</reference>
<reference key="11">
    <citation type="journal article" date="2011" name="Circ. Res.">
        <title>Fibroblast growth factor homologous factor 13 regulates Na+ channels and conduction velocity in murine hearts.</title>
        <authorList>
            <person name="Wang C."/>
            <person name="Hennessey J.A."/>
            <person name="Kirkton R.D."/>
            <person name="Wang C."/>
            <person name="Graham V."/>
            <person name="Puranam R.S."/>
            <person name="Rosenberg P.B."/>
            <person name="Bursac N."/>
            <person name="Pitt G.S."/>
        </authorList>
    </citation>
    <scope>FUNCTION IN SODIUM CHANNEL REGULATION</scope>
    <scope>TISSUE SPECIFICITY</scope>
    <scope>INTERACTION WITH SCN5A</scope>
    <scope>SUBCELLULAR LOCATION</scope>
</reference>
<reference key="12">
    <citation type="journal article" date="2012" name="Cell">
        <title>Fibroblast growth factor 13 is a microtubule-stabilizing protein regulating neuronal polarization and migration.</title>
        <authorList>
            <person name="Wu Q.F."/>
            <person name="Yang L."/>
            <person name="Li S."/>
            <person name="Wang Q."/>
            <person name="Yuan X.B."/>
            <person name="Gao X."/>
            <person name="Bao L."/>
            <person name="Zhang X."/>
        </authorList>
    </citation>
    <scope>FUNCTION IN NEURON POLARIZATION</scope>
    <scope>FUNCTION IN NEURON MIGRATION</scope>
    <scope>DISRUPTION PHENOTYPE</scope>
    <scope>SUBCELLULAR LOCATION</scope>
    <scope>TUBULIN-BINDING</scope>
</reference>
<reference key="13">
    <citation type="journal article" date="2019" name="Science">
        <title>Distinct molecular programs regulate synapse specificity in cortical inhibitory circuits.</title>
        <authorList>
            <person name="Favuzzi E."/>
            <person name="Deogracias R."/>
            <person name="Marques-Smith A."/>
            <person name="Maeso P."/>
            <person name="Jezequel J."/>
            <person name="Exposito-Alonso D."/>
            <person name="Balia M."/>
            <person name="Kroon T."/>
            <person name="Hinojosa A.J."/>
            <person name="Maraver E.F."/>
            <person name="Rico B."/>
        </authorList>
    </citation>
    <scope>FUNCTION</scope>
    <scope>DEVELOPMENTAL STAGE</scope>
</reference>
<evidence type="ECO:0000250" key="1"/>
<evidence type="ECO:0000250" key="2">
    <source>
        <dbReference type="UniProtKB" id="Q92913"/>
    </source>
</evidence>
<evidence type="ECO:0000256" key="3">
    <source>
        <dbReference type="SAM" id="MobiDB-lite"/>
    </source>
</evidence>
<evidence type="ECO:0000269" key="4">
    <source>
    </source>
</evidence>
<evidence type="ECO:0000269" key="5">
    <source>
    </source>
</evidence>
<evidence type="ECO:0000269" key="6">
    <source>
    </source>
</evidence>
<evidence type="ECO:0000269" key="7">
    <source>
    </source>
</evidence>
<evidence type="ECO:0000269" key="8">
    <source>
    </source>
</evidence>
<evidence type="ECO:0000269" key="9">
    <source>
    </source>
</evidence>
<evidence type="ECO:0000269" key="10">
    <source>
    </source>
</evidence>
<evidence type="ECO:0000303" key="11">
    <source>
    </source>
</evidence>
<evidence type="ECO:0000303" key="12">
    <source>
    </source>
</evidence>
<evidence type="ECO:0000305" key="13"/>
<evidence type="ECO:0000312" key="14">
    <source>
        <dbReference type="MGI" id="MGI:109178"/>
    </source>
</evidence>
<evidence type="ECO:0007744" key="15">
    <source>
    </source>
</evidence>
<proteinExistence type="evidence at protein level"/>
<organism>
    <name type="scientific">Mus musculus</name>
    <name type="common">Mouse</name>
    <dbReference type="NCBI Taxonomy" id="10090"/>
    <lineage>
        <taxon>Eukaryota</taxon>
        <taxon>Metazoa</taxon>
        <taxon>Chordata</taxon>
        <taxon>Craniata</taxon>
        <taxon>Vertebrata</taxon>
        <taxon>Euteleostomi</taxon>
        <taxon>Mammalia</taxon>
        <taxon>Eutheria</taxon>
        <taxon>Euarchontoglires</taxon>
        <taxon>Glires</taxon>
        <taxon>Rodentia</taxon>
        <taxon>Myomorpha</taxon>
        <taxon>Muroidea</taxon>
        <taxon>Muridae</taxon>
        <taxon>Murinae</taxon>
        <taxon>Mus</taxon>
        <taxon>Mus</taxon>
    </lineage>
</organism>
<name>FGF13_MOUSE</name>
<protein>
    <recommendedName>
        <fullName evidence="13">Fibroblast growth factor 13</fullName>
        <shortName>FGF-13</shortName>
    </recommendedName>
    <alternativeName>
        <fullName>Fibroblast growth factor homologous factor 2</fullName>
        <shortName>FHF-2</shortName>
    </alternativeName>
</protein>
<feature type="chain" id="PRO_0000147608" description="Fibroblast growth factor 13">
    <location>
        <begin position="1"/>
        <end position="245"/>
    </location>
</feature>
<feature type="region of interest" description="Mediates targeting to the nucleus">
    <location>
        <begin position="1"/>
        <end position="62"/>
    </location>
</feature>
<feature type="region of interest" description="Disordered" evidence="3">
    <location>
        <begin position="1"/>
        <end position="36"/>
    </location>
</feature>
<feature type="region of interest" description="Mediates interaction with sodium channels" evidence="1">
    <location>
        <begin position="67"/>
        <end position="201"/>
    </location>
</feature>
<feature type="region of interest" description="Tubulin-binding domain necessary and sufficient for tubulin-binding">
    <location>
        <begin position="157"/>
        <end position="164"/>
    </location>
</feature>
<feature type="region of interest" description="Disordered" evidence="3">
    <location>
        <begin position="213"/>
        <end position="245"/>
    </location>
</feature>
<feature type="compositionally biased region" description="Polar residues" evidence="3">
    <location>
        <begin position="215"/>
        <end position="245"/>
    </location>
</feature>
<feature type="modified residue" description="Phosphoserine" evidence="15">
    <location>
        <position position="208"/>
    </location>
</feature>
<feature type="splice variant" id="VSP_044130" description="In isoform 3." evidence="11">
    <original>MAAAIASSLIRQKRQAREREKSNACKCVSSPSKGKTSCDKNKLNVFSRVKLFGSKKRRRRRPE</original>
    <variation>MSGKVTKPKEEKDASKVLDDAPPGTQEYIMLRQDSIQSAELKKKESPFRAKCHEIFCCPPKQVHHKENTEPEE</variation>
    <location>
        <begin position="1"/>
        <end position="63"/>
    </location>
</feature>
<feature type="splice variant" id="VSP_044131" description="In isoform 2." evidence="12">
    <original>MAAAIASSLIRQKRQAREREKSNACKCVSSPSKGKTSCDKNKLNVFSRVKLFGSKKRRRRRP</original>
    <variation>MALLRKSYS</variation>
    <location>
        <begin position="1"/>
        <end position="62"/>
    </location>
</feature>
<feature type="sequence conflict" description="In Ref. 1; AAB18918." evidence="13" ref="1">
    <original>A</original>
    <variation>T</variation>
    <location>
        <position position="2"/>
    </location>
</feature>
<feature type="sequence conflict" description="In Ref. 2; AAB71606." evidence="13" ref="2">
    <location>
        <position position="2"/>
    </location>
</feature>
<feature type="sequence conflict" description="In Ref. 2; AAB71606." evidence="13" ref="2">
    <original>L</original>
    <variation>Q</variation>
    <location>
        <position position="199"/>
    </location>
</feature>
<comment type="function">
    <text evidence="5 6 7 8 9">Microtubule-binding protein which directly binds tubulin and is involved in both polymerization and stabilization of microtubules (PubMed:22726441). Through its action on microtubules, may participate to the refinement of axons by negatively regulating axonal and leading processes branching (PubMed:22726441). Plays a crucial role in neuron polarization and migration in the cerebral cortex and the hippocampus (PubMed:22726441). Regulates voltage-gated sodium channel transport and function (PubMed:21817159). May also play a role in MAPK signaling (PubMed:11378392, PubMed:12244047). Required for the development of axonal initial segment-targeting inhibitory GABAergic synapses made by chandelier neurons (PubMed:30679375).</text>
</comment>
<comment type="function">
    <molecule>Isoform 1</molecule>
    <text evidence="8">Seems not to be involved in neuroblast polarization and migration but regulates axon branching.</text>
</comment>
<comment type="subunit">
    <text evidence="2 5 7">Interacts with SCN8A; regulates SCN8A activity (By similarity). Interacts with SCN1A; may regulate SCN1A activity (By similarity). Interacts with SCN5A; the interaction is direct and may regulate SNC5A density at membranes and function (PubMed:21817159). May also interact with SCN2A and SCN11A (By similarity). Interacts with MAPK8IP2; may regulate the MAPK8IP2 scaffolding activity (PubMed:11378392).</text>
</comment>
<comment type="subcellular location">
    <subcellularLocation>
        <location evidence="8">Cell projection</location>
        <location evidence="8">Filopodium</location>
    </subcellularLocation>
    <subcellularLocation>
        <location evidence="8">Cell projection</location>
        <location evidence="8">Growth cone</location>
    </subcellularLocation>
    <subcellularLocation>
        <location evidence="8">Cell projection</location>
        <location evidence="8">Dendrite</location>
    </subcellularLocation>
    <subcellularLocation>
        <location evidence="7">Cell membrane</location>
        <location evidence="7">Sarcolemma</location>
    </subcellularLocation>
    <subcellularLocation>
        <location evidence="8">Cytoplasm</location>
    </subcellularLocation>
    <text evidence="8">Not secreted. Localizes to the lateral membrane and intercalated disks of myocytes.</text>
</comment>
<comment type="subcellular location">
    <molecule>Isoform 1</molecule>
    <subcellularLocation>
        <location evidence="2">Nucleus</location>
    </subcellularLocation>
</comment>
<comment type="subcellular location">
    <molecule>Isoform 2</molecule>
    <subcellularLocation>
        <location evidence="2">Cytoplasm</location>
    </subcellularLocation>
    <subcellularLocation>
        <location evidence="2">Nucleus</location>
    </subcellularLocation>
</comment>
<comment type="subcellular location">
    <molecule>Isoform 3</molecule>
    <subcellularLocation>
        <location evidence="4">Cytoplasm</location>
    </subcellularLocation>
    <subcellularLocation>
        <location evidence="4">Nucleus</location>
    </subcellularLocation>
</comment>
<comment type="alternative products">
    <event type="alternative splicing"/>
    <isoform>
        <id>P70377-1</id>
        <name>1</name>
        <name>FGF13A</name>
        <name evidence="11">mFHF-2(1S)</name>
        <name>FGF13-S</name>
        <sequence type="displayed"/>
    </isoform>
    <isoform>
        <id>P70377-2</id>
        <name>2</name>
        <name>FGF13B</name>
        <name evidence="11">mFHF-2(1U)</name>
        <name>FGF13-U</name>
        <sequence type="described" ref="VSP_044131"/>
    </isoform>
    <isoform>
        <id>P70377-3</id>
        <name>3</name>
        <name>FGF13-VY</name>
        <name evidence="11">mFHF-2(1Y+1V)</name>
        <sequence type="described" ref="VSP_044130"/>
    </isoform>
    <text>Additional isoforms seem to exist.</text>
</comment>
<comment type="tissue specificity">
    <text evidence="4 7 10">Detected in brain, eye and heart. In brain, the different isoforms display different patterns of expression. Expressed in brain and heart (at protein level). Isoform 3 is highly expressed in cardiac myocytes while isoform 1 is the most abundant in brain.</text>
</comment>
<comment type="developmental stage">
    <text evidence="9 10">Expressed in the subplate of the embryonic cortex and the axonal tracts in the intermediate zone, and in axonal tracts of projection neurons, specifically in the corticothalamic tract and the corpus callosum (at protein level). Isoform 2 is transiently expressed in the neocortex and hippocampus from 17 dpc to P7 (at protein level). In embryonic brain, present in all divisions of the central and peripheral nervous system and it is at least 5 times more abundant than other FHFs. Detected in the subplate, ganglionic eminences, and proliferative zones of the cortical wall at 14 dpc. Detected in the cortical plate of the cerebral cortex, hippocampus, and striatum from 17 dpc to P14. Expression is markedly reduced in adult brain where it is most abundant in hippocampus. Also detected in developing kidney. Expressed in developing chandelier neurons.</text>
</comment>
<comment type="PTM">
    <text evidence="1">May be phosphorylated.</text>
</comment>
<comment type="disruption phenotype">
    <text evidence="8">Conditional knockout mice lacking fgf13 in the cerebral cortex or mice lacking fgf13 in most tissues display similar phenotypes of impaired spatial acquisition and memory. The cued memory and the capacity of novel object recognition are altered. They also display anxiety-related and reduced depression-like behaviors. This is associated with a disorganization of cortical structure and neural circuits. The laminar formation of the neocortex is delayed and the hippocampal development is also affected.</text>
</comment>
<comment type="similarity">
    <text evidence="13">Belongs to the heparin-binding growth factors family.</text>
</comment>